<protein>
    <recommendedName>
        <fullName>Uncharacterized protein RC0076</fullName>
    </recommendedName>
</protein>
<sequence length="186" mass="21153">MIHVKYIILGFIMVSSLNLYAANNDIIANKKVVKVEVSNEHLKTLNEASTLLISCVDFRLIDETDKLMKQLGLEDNFDKVSLPGASLALINDKYTYWGKTIEDTIEILQELHNIKQIVFLDHRECGAYKILIGQEQLNTKEKETAAHAAILNKARDIIKEKFPQLKVYTFLMGLDGVVEQIYEIPS</sequence>
<proteinExistence type="inferred from homology"/>
<reference key="1">
    <citation type="journal article" date="2001" name="Science">
        <title>Mechanisms of evolution in Rickettsia conorii and R. prowazekii.</title>
        <authorList>
            <person name="Ogata H."/>
            <person name="Audic S."/>
            <person name="Renesto-Audiffren P."/>
            <person name="Fournier P.-E."/>
            <person name="Barbe V."/>
            <person name="Samson D."/>
            <person name="Roux V."/>
            <person name="Cossart P."/>
            <person name="Weissenbach J."/>
            <person name="Claverie J.-M."/>
            <person name="Raoult D."/>
        </authorList>
    </citation>
    <scope>NUCLEOTIDE SEQUENCE [LARGE SCALE GENOMIC DNA]</scope>
    <source>
        <strain>ATCC VR-613 / Malish 7</strain>
    </source>
</reference>
<accession>Q92JJ1</accession>
<organism>
    <name type="scientific">Rickettsia conorii (strain ATCC VR-613 / Malish 7)</name>
    <dbReference type="NCBI Taxonomy" id="272944"/>
    <lineage>
        <taxon>Bacteria</taxon>
        <taxon>Pseudomonadati</taxon>
        <taxon>Pseudomonadota</taxon>
        <taxon>Alphaproteobacteria</taxon>
        <taxon>Rickettsiales</taxon>
        <taxon>Rickettsiaceae</taxon>
        <taxon>Rickettsieae</taxon>
        <taxon>Rickettsia</taxon>
        <taxon>spotted fever group</taxon>
    </lineage>
</organism>
<keyword id="KW-0732">Signal</keyword>
<name>Y076_RICCN</name>
<gene>
    <name type="ordered locus">RC0076</name>
</gene>
<dbReference type="EMBL" id="AE006914">
    <property type="protein sequence ID" value="AAL02614.1"/>
    <property type="molecule type" value="Genomic_DNA"/>
</dbReference>
<dbReference type="PIR" id="D97709">
    <property type="entry name" value="D97709"/>
</dbReference>
<dbReference type="RefSeq" id="WP_004996838.1">
    <property type="nucleotide sequence ID" value="NC_003103.1"/>
</dbReference>
<dbReference type="SMR" id="Q92JJ1"/>
<dbReference type="KEGG" id="rco:RC0076"/>
<dbReference type="HOGENOM" id="CLU_125832_0_0_5"/>
<dbReference type="Proteomes" id="UP000000816">
    <property type="component" value="Chromosome"/>
</dbReference>
<dbReference type="GO" id="GO:0004089">
    <property type="term" value="F:carbonate dehydratase activity"/>
    <property type="evidence" value="ECO:0007669"/>
    <property type="project" value="InterPro"/>
</dbReference>
<dbReference type="GO" id="GO:0008270">
    <property type="term" value="F:zinc ion binding"/>
    <property type="evidence" value="ECO:0007669"/>
    <property type="project" value="InterPro"/>
</dbReference>
<dbReference type="Gene3D" id="3.40.1050.10">
    <property type="entry name" value="Carbonic anhydrase"/>
    <property type="match status" value="1"/>
</dbReference>
<dbReference type="InterPro" id="IPR036874">
    <property type="entry name" value="Carbonic_anhydrase_sf"/>
</dbReference>
<dbReference type="InterPro" id="IPR046871">
    <property type="entry name" value="Pro_CA_2"/>
</dbReference>
<dbReference type="Pfam" id="PF20393">
    <property type="entry name" value="Pro_CA_2"/>
    <property type="match status" value="1"/>
</dbReference>
<dbReference type="SUPFAM" id="SSF53056">
    <property type="entry name" value="beta-carbonic anhydrase, cab"/>
    <property type="match status" value="1"/>
</dbReference>
<evidence type="ECO:0000255" key="1"/>
<feature type="signal peptide" evidence="1">
    <location>
        <begin position="1"/>
        <end position="21"/>
    </location>
</feature>
<feature type="chain" id="PRO_0000260001" description="Uncharacterized protein RC0076">
    <location>
        <begin position="22"/>
        <end position="186"/>
    </location>
</feature>